<comment type="function">
    <text evidence="1">Functions as a positive effector of cell expansion through modulation of auxin transport.</text>
</comment>
<comment type="subcellular location">
    <subcellularLocation>
        <location evidence="1">Cell membrane</location>
        <topology evidence="1">Peripheral membrane protein</topology>
    </subcellularLocation>
</comment>
<comment type="induction">
    <text evidence="2 3">By auxin.</text>
</comment>
<comment type="similarity">
    <text evidence="5">Belongs to the ARG7 family.</text>
</comment>
<protein>
    <recommendedName>
        <fullName evidence="5">Auxin-responsive protein SAUR23</fullName>
    </recommendedName>
    <alternativeName>
        <fullName evidence="4">Protein SMALL AUXIN UP RNA 23</fullName>
    </alternativeName>
</protein>
<gene>
    <name evidence="4" type="primary">SAUR23</name>
    <name evidence="6" type="ordered locus">At5g18060</name>
    <name evidence="7" type="ORF">MCM23.16</name>
</gene>
<proteinExistence type="evidence at transcript level"/>
<name>SAU23_ARATH</name>
<evidence type="ECO:0000250" key="1">
    <source>
        <dbReference type="UniProtKB" id="Q9FJG1"/>
    </source>
</evidence>
<evidence type="ECO:0000269" key="2">
    <source>
    </source>
</evidence>
<evidence type="ECO:0000269" key="3">
    <source>
    </source>
</evidence>
<evidence type="ECO:0000303" key="4">
    <source>
    </source>
</evidence>
<evidence type="ECO:0000305" key="5"/>
<evidence type="ECO:0000312" key="6">
    <source>
        <dbReference type="Araport" id="AT5G18060"/>
    </source>
</evidence>
<evidence type="ECO:0000312" key="7">
    <source>
        <dbReference type="EMBL" id="BAB08405.1"/>
    </source>
</evidence>
<organism>
    <name type="scientific">Arabidopsis thaliana</name>
    <name type="common">Mouse-ear cress</name>
    <dbReference type="NCBI Taxonomy" id="3702"/>
    <lineage>
        <taxon>Eukaryota</taxon>
        <taxon>Viridiplantae</taxon>
        <taxon>Streptophyta</taxon>
        <taxon>Embryophyta</taxon>
        <taxon>Tracheophyta</taxon>
        <taxon>Spermatophyta</taxon>
        <taxon>Magnoliopsida</taxon>
        <taxon>eudicotyledons</taxon>
        <taxon>Gunneridae</taxon>
        <taxon>Pentapetalae</taxon>
        <taxon>rosids</taxon>
        <taxon>malvids</taxon>
        <taxon>Brassicales</taxon>
        <taxon>Brassicaceae</taxon>
        <taxon>Camelineae</taxon>
        <taxon>Arabidopsis</taxon>
    </lineage>
</organism>
<dbReference type="EMBL" id="AB015473">
    <property type="protein sequence ID" value="BAB08405.1"/>
    <property type="molecule type" value="Genomic_DNA"/>
</dbReference>
<dbReference type="EMBL" id="CP002688">
    <property type="protein sequence ID" value="AED92501.1"/>
    <property type="molecule type" value="Genomic_DNA"/>
</dbReference>
<dbReference type="EMBL" id="BT010800">
    <property type="protein sequence ID" value="AAR24167.1"/>
    <property type="molecule type" value="mRNA"/>
</dbReference>
<dbReference type="EMBL" id="BT011272">
    <property type="protein sequence ID" value="AAR92308.1"/>
    <property type="molecule type" value="mRNA"/>
</dbReference>
<dbReference type="RefSeq" id="NP_197307.1">
    <property type="nucleotide sequence ID" value="NM_121811.5"/>
</dbReference>
<dbReference type="SMR" id="Q9FJF6"/>
<dbReference type="FunCoup" id="Q9FJF6">
    <property type="interactions" value="289"/>
</dbReference>
<dbReference type="STRING" id="3702.Q9FJF6"/>
<dbReference type="iPTMnet" id="Q9FJF6"/>
<dbReference type="PaxDb" id="3702-AT5G18060.1"/>
<dbReference type="EnsemblPlants" id="AT5G18060.1">
    <property type="protein sequence ID" value="AT5G18060.1"/>
    <property type="gene ID" value="AT5G18060"/>
</dbReference>
<dbReference type="GeneID" id="831310"/>
<dbReference type="Gramene" id="AT5G18060.1">
    <property type="protein sequence ID" value="AT5G18060.1"/>
    <property type="gene ID" value="AT5G18060"/>
</dbReference>
<dbReference type="KEGG" id="ath:AT5G18060"/>
<dbReference type="Araport" id="AT5G18060"/>
<dbReference type="TAIR" id="AT5G18060">
    <property type="gene designation" value="SAUR23"/>
</dbReference>
<dbReference type="eggNOG" id="ENOG502STBD">
    <property type="taxonomic scope" value="Eukaryota"/>
</dbReference>
<dbReference type="HOGENOM" id="CLU_098106_3_0_1"/>
<dbReference type="InParanoid" id="Q9FJF6"/>
<dbReference type="OMA" id="SETEFAH"/>
<dbReference type="PhylomeDB" id="Q9FJF6"/>
<dbReference type="PRO" id="PR:Q9FJF6"/>
<dbReference type="Proteomes" id="UP000006548">
    <property type="component" value="Chromosome 5"/>
</dbReference>
<dbReference type="ExpressionAtlas" id="Q9FJF6">
    <property type="expression patterns" value="baseline and differential"/>
</dbReference>
<dbReference type="GO" id="GO:0005886">
    <property type="term" value="C:plasma membrane"/>
    <property type="evidence" value="ECO:0007669"/>
    <property type="project" value="UniProtKB-SubCell"/>
</dbReference>
<dbReference type="GO" id="GO:0009734">
    <property type="term" value="P:auxin-activated signaling pathway"/>
    <property type="evidence" value="ECO:0007669"/>
    <property type="project" value="UniProtKB-KW"/>
</dbReference>
<dbReference type="GO" id="GO:0009733">
    <property type="term" value="P:response to auxin"/>
    <property type="evidence" value="ECO:0000270"/>
    <property type="project" value="UniProtKB"/>
</dbReference>
<dbReference type="InterPro" id="IPR003676">
    <property type="entry name" value="SAUR_fam"/>
</dbReference>
<dbReference type="PANTHER" id="PTHR31929">
    <property type="entry name" value="SAUR-LIKE AUXIN-RESPONSIVE PROTEIN FAMILY-RELATED"/>
    <property type="match status" value="1"/>
</dbReference>
<dbReference type="Pfam" id="PF02519">
    <property type="entry name" value="Auxin_inducible"/>
    <property type="match status" value="1"/>
</dbReference>
<accession>Q9FJF6</accession>
<sequence>MALVRSLLVAKKILSRSAAAVSAPPKGFLAVYVGESQKKRYLVPLSYLNQPSFQALLSKSEEEFGFDHPMGGLTIPCPEDTFINVTSRLH</sequence>
<keyword id="KW-0927">Auxin signaling pathway</keyword>
<keyword id="KW-1003">Cell membrane</keyword>
<keyword id="KW-0217">Developmental protein</keyword>
<keyword id="KW-0341">Growth regulation</keyword>
<keyword id="KW-0472">Membrane</keyword>
<keyword id="KW-1185">Reference proteome</keyword>
<feature type="chain" id="PRO_0000433065" description="Auxin-responsive protein SAUR23">
    <location>
        <begin position="1"/>
        <end position="90"/>
    </location>
</feature>
<reference key="1">
    <citation type="journal article" date="1998" name="DNA Res.">
        <title>Structural analysis of Arabidopsis thaliana chromosome 5. VII. Sequence features of the regions of 1,013,767 bp covered by sixteen physically assigned P1 and TAC clones.</title>
        <authorList>
            <person name="Nakamura Y."/>
            <person name="Sato S."/>
            <person name="Asamizu E."/>
            <person name="Kaneko T."/>
            <person name="Kotani H."/>
            <person name="Miyajima N."/>
            <person name="Tabata S."/>
        </authorList>
    </citation>
    <scope>NUCLEOTIDE SEQUENCE [LARGE SCALE GENOMIC DNA]</scope>
    <source>
        <strain>cv. Columbia</strain>
    </source>
</reference>
<reference key="2">
    <citation type="journal article" date="2017" name="Plant J.">
        <title>Araport11: a complete reannotation of the Arabidopsis thaliana reference genome.</title>
        <authorList>
            <person name="Cheng C.Y."/>
            <person name="Krishnakumar V."/>
            <person name="Chan A.P."/>
            <person name="Thibaud-Nissen F."/>
            <person name="Schobel S."/>
            <person name="Town C.D."/>
        </authorList>
    </citation>
    <scope>GENOME REANNOTATION</scope>
    <source>
        <strain>cv. Columbia</strain>
    </source>
</reference>
<reference key="3">
    <citation type="submission" date="2004-01" db="EMBL/GenBank/DDBJ databases">
        <title>Arabidopsis ORF clones.</title>
        <authorList>
            <person name="Cheuk R.F."/>
            <person name="Chen H."/>
            <person name="Kim C.J."/>
            <person name="Shinn P."/>
            <person name="Ecker J.R."/>
        </authorList>
    </citation>
    <scope>NUCLEOTIDE SEQUENCE [LARGE SCALE MRNA]</scope>
    <source>
        <strain>cv. Columbia</strain>
    </source>
</reference>
<reference key="4">
    <citation type="journal article" date="2002" name="Plant Mol. Biol.">
        <title>Auxin-responsive gene expression: genes, promoters and regulatory factors.</title>
        <authorList>
            <person name="Hagen G."/>
            <person name="Guilfoyle T.J."/>
        </authorList>
    </citation>
    <scope>GENE FAMILY</scope>
    <scope>NOMENCLATURE</scope>
</reference>
<reference key="5">
    <citation type="journal article" date="2012" name="Plant J.">
        <title>The SAUR19 subfamily of SMALL AUXIN UP RNA genes promote cell expansion.</title>
        <authorList>
            <person name="Spartz A.K."/>
            <person name="Lee S.H."/>
            <person name="Wenger J.P."/>
            <person name="Gonzalez N."/>
            <person name="Itoh H."/>
            <person name="Inze D."/>
            <person name="Peer W.A."/>
            <person name="Murphy A.S."/>
            <person name="Overvoorde P.J."/>
            <person name="Gray W.M."/>
        </authorList>
    </citation>
    <scope>INDUCTION BY AUXIN</scope>
</reference>
<reference key="6">
    <citation type="journal article" date="2017" name="Plant Physiol.">
        <title>Constitutive expression of Arabidopsis SMALL AUXIN UP RNA19 (SAUR19) in tomato confers auxin-independent hypocotyl elongation.</title>
        <authorList>
            <person name="Spartz A.K."/>
            <person name="Lor V.S."/>
            <person name="Ren H."/>
            <person name="Olszewski N.E."/>
            <person name="Miller N.D."/>
            <person name="Wu G."/>
            <person name="Spalding E.P."/>
            <person name="Gray W.M."/>
        </authorList>
    </citation>
    <scope>INDUCTION BY AUXIN</scope>
</reference>